<organism>
    <name type="scientific">Mycolicibacterium gilvum (strain PYR-GCK)</name>
    <name type="common">Mycobacterium gilvum (strain PYR-GCK)</name>
    <dbReference type="NCBI Taxonomy" id="350054"/>
    <lineage>
        <taxon>Bacteria</taxon>
        <taxon>Bacillati</taxon>
        <taxon>Actinomycetota</taxon>
        <taxon>Actinomycetes</taxon>
        <taxon>Mycobacteriales</taxon>
        <taxon>Mycobacteriaceae</taxon>
        <taxon>Mycolicibacterium</taxon>
    </lineage>
</organism>
<comment type="function">
    <text evidence="1">Na(+)/H(+) antiporter that extrudes sodium in exchange for external protons.</text>
</comment>
<comment type="catalytic activity">
    <reaction evidence="1">
        <text>Na(+)(in) + 2 H(+)(out) = Na(+)(out) + 2 H(+)(in)</text>
        <dbReference type="Rhea" id="RHEA:29251"/>
        <dbReference type="ChEBI" id="CHEBI:15378"/>
        <dbReference type="ChEBI" id="CHEBI:29101"/>
    </reaction>
    <physiologicalReaction direction="left-to-right" evidence="1">
        <dbReference type="Rhea" id="RHEA:29252"/>
    </physiologicalReaction>
</comment>
<comment type="subcellular location">
    <subcellularLocation>
        <location evidence="1">Cell membrane</location>
        <topology evidence="1">Multi-pass membrane protein</topology>
    </subcellularLocation>
</comment>
<comment type="similarity">
    <text evidence="3">In the N-terminal section; belongs to the NhaA Na(+)/H(+) (TC 2.A.33) antiporter family.</text>
</comment>
<reference key="1">
    <citation type="submission" date="2007-04" db="EMBL/GenBank/DDBJ databases">
        <title>Complete sequence of chromosome of Mycobacterium gilvum PYR-GCK.</title>
        <authorList>
            <consortium name="US DOE Joint Genome Institute"/>
            <person name="Copeland A."/>
            <person name="Lucas S."/>
            <person name="Lapidus A."/>
            <person name="Barry K."/>
            <person name="Detter J.C."/>
            <person name="Glavina del Rio T."/>
            <person name="Hammon N."/>
            <person name="Israni S."/>
            <person name="Dalin E."/>
            <person name="Tice H."/>
            <person name="Pitluck S."/>
            <person name="Chain P."/>
            <person name="Malfatti S."/>
            <person name="Shin M."/>
            <person name="Vergez L."/>
            <person name="Schmutz J."/>
            <person name="Larimer F."/>
            <person name="Land M."/>
            <person name="Hauser L."/>
            <person name="Kyrpides N."/>
            <person name="Mikhailova N."/>
            <person name="Miller C."/>
            <person name="Richardson P."/>
        </authorList>
    </citation>
    <scope>NUCLEOTIDE SEQUENCE [LARGE SCALE GENOMIC DNA]</scope>
    <source>
        <strain>PYR-GCK</strain>
    </source>
</reference>
<sequence>MTVTEPATQRGFPLLPSRLSRGSKATRTTDNTAAALLLTFTVVAILWANSPWAHTYSALLDTHVGFSFGSHHAEMTVKHVVNDALMTFFFFIVGLEVTREFTIGELTDRSRAAVPVVAAAAGLILPAVVFLAFNPSGENAHAWGVVISTDTAFLVGALAIIKPKFPARVRLFLLTLAVVDDVGALIAIAVLYSDNIQVAPLVVAVALLGALALVRYLPKARGPAYAVLGAALWIALYLAGIHPTLAGVAVALLIPVFTPERAPVERAVQQIRAFRQSPNSRYARAASRSLRDSISINERLQTAVSPVVSFVILPLFALVNAGVLLDGPSLTAALRSPLTWGIVAGLVVGKFVGIAGATWLIRRTGLGVLAPGLTLRRIAGGAALSGIGFTISLFIVDIAIDDPSRQDQARIGVLAASVLAFALGWAIFRITDWLSPPEPVGLKLLRPIDPERDHVRGRPDAPLTLVEYGDFECPFCSRVTGAIDEVRAHFGDDLLYVWRHFPLERAHPRAFDAARASEAAALQGRFWEMTHELFTHQDDLEWSDMYRYAVAAGCDIEQFDQDVRVHSSKVLHRVSDDAEDADAMDLNATPTLFVNGKRHRGPWDAASLIRALEAGRG</sequence>
<feature type="chain" id="PRO_0000334478" description="Na(+)/H(+) antiporter NhaA 1">
    <location>
        <begin position="1"/>
        <end position="617"/>
    </location>
</feature>
<feature type="transmembrane region" description="Helical" evidence="1">
    <location>
        <begin position="33"/>
        <end position="53"/>
    </location>
</feature>
<feature type="transmembrane region" description="Helical" evidence="1">
    <location>
        <begin position="75"/>
        <end position="95"/>
    </location>
</feature>
<feature type="transmembrane region" description="Helical" evidence="1">
    <location>
        <begin position="113"/>
        <end position="133"/>
    </location>
</feature>
<feature type="transmembrane region" description="Helical" evidence="1">
    <location>
        <begin position="141"/>
        <end position="161"/>
    </location>
</feature>
<feature type="transmembrane region" description="Helical" evidence="1">
    <location>
        <begin position="171"/>
        <end position="191"/>
    </location>
</feature>
<feature type="transmembrane region" description="Helical" evidence="1">
    <location>
        <begin position="198"/>
        <end position="218"/>
    </location>
</feature>
<feature type="transmembrane region" description="Helical" evidence="1">
    <location>
        <begin position="234"/>
        <end position="254"/>
    </location>
</feature>
<feature type="transmembrane region" description="Helical" evidence="1">
    <location>
        <begin position="304"/>
        <end position="324"/>
    </location>
</feature>
<feature type="transmembrane region" description="Helical" evidence="1">
    <location>
        <begin position="341"/>
        <end position="361"/>
    </location>
</feature>
<feature type="transmembrane region" description="Helical" evidence="1">
    <location>
        <begin position="378"/>
        <end position="398"/>
    </location>
</feature>
<feature type="transmembrane region" description="Helical" evidence="1">
    <location>
        <begin position="411"/>
        <end position="431"/>
    </location>
</feature>
<feature type="domain" description="Thioredoxin">
    <location>
        <begin position="434"/>
        <end position="617"/>
    </location>
</feature>
<feature type="region of interest" description="Na(+)/H(+) antiporter NhaA">
    <location>
        <begin position="1"/>
        <end position="433"/>
    </location>
</feature>
<feature type="region of interest" description="Disordered" evidence="2">
    <location>
        <begin position="1"/>
        <end position="26"/>
    </location>
</feature>
<evidence type="ECO:0000255" key="1">
    <source>
        <dbReference type="HAMAP-Rule" id="MF_01844"/>
    </source>
</evidence>
<evidence type="ECO:0000256" key="2">
    <source>
        <dbReference type="SAM" id="MobiDB-lite"/>
    </source>
</evidence>
<evidence type="ECO:0000305" key="3"/>
<name>NHAA1_MYCGI</name>
<proteinExistence type="inferred from homology"/>
<dbReference type="EMBL" id="CP000656">
    <property type="protein sequence ID" value="ABP42733.1"/>
    <property type="molecule type" value="Genomic_DNA"/>
</dbReference>
<dbReference type="SMR" id="A4T134"/>
<dbReference type="STRING" id="350054.Mflv_0238"/>
<dbReference type="KEGG" id="mgi:Mflv_0238"/>
<dbReference type="eggNOG" id="COG1651">
    <property type="taxonomic scope" value="Bacteria"/>
</dbReference>
<dbReference type="eggNOG" id="COG3004">
    <property type="taxonomic scope" value="Bacteria"/>
</dbReference>
<dbReference type="HOGENOM" id="CLU_015803_3_0_11"/>
<dbReference type="GO" id="GO:0005886">
    <property type="term" value="C:plasma membrane"/>
    <property type="evidence" value="ECO:0007669"/>
    <property type="project" value="UniProtKB-SubCell"/>
</dbReference>
<dbReference type="GO" id="GO:0016491">
    <property type="term" value="F:oxidoreductase activity"/>
    <property type="evidence" value="ECO:0007669"/>
    <property type="project" value="UniProtKB-ARBA"/>
</dbReference>
<dbReference type="GO" id="GO:0015385">
    <property type="term" value="F:sodium:proton antiporter activity"/>
    <property type="evidence" value="ECO:0007669"/>
    <property type="project" value="TreeGrafter"/>
</dbReference>
<dbReference type="GO" id="GO:0006885">
    <property type="term" value="P:regulation of pH"/>
    <property type="evidence" value="ECO:0007669"/>
    <property type="project" value="InterPro"/>
</dbReference>
<dbReference type="CDD" id="cd02972">
    <property type="entry name" value="DsbA_family"/>
    <property type="match status" value="1"/>
</dbReference>
<dbReference type="Gene3D" id="3.40.30.10">
    <property type="entry name" value="Glutaredoxin"/>
    <property type="match status" value="1"/>
</dbReference>
<dbReference type="Gene3D" id="1.20.1530.10">
    <property type="entry name" value="Na+/H+ antiporter like domain"/>
    <property type="match status" value="1"/>
</dbReference>
<dbReference type="HAMAP" id="MF_01844">
    <property type="entry name" value="NhaA"/>
    <property type="match status" value="1"/>
</dbReference>
<dbReference type="InterPro" id="IPR023171">
    <property type="entry name" value="Na/H_antiporter_dom_sf"/>
</dbReference>
<dbReference type="InterPro" id="IPR004670">
    <property type="entry name" value="NhaA"/>
</dbReference>
<dbReference type="InterPro" id="IPR012336">
    <property type="entry name" value="Thioredoxin-like_fold"/>
</dbReference>
<dbReference type="InterPro" id="IPR036249">
    <property type="entry name" value="Thioredoxin-like_sf"/>
</dbReference>
<dbReference type="InterPro" id="IPR013766">
    <property type="entry name" value="Thioredoxin_domain"/>
</dbReference>
<dbReference type="NCBIfam" id="TIGR00773">
    <property type="entry name" value="NhaA"/>
    <property type="match status" value="1"/>
</dbReference>
<dbReference type="PANTHER" id="PTHR30341:SF0">
    <property type="entry name" value="NA(+)_H(+) ANTIPORTER NHAA"/>
    <property type="match status" value="1"/>
</dbReference>
<dbReference type="PANTHER" id="PTHR30341">
    <property type="entry name" value="SODIUM ION/PROTON ANTIPORTER NHAA-RELATED"/>
    <property type="match status" value="1"/>
</dbReference>
<dbReference type="Pfam" id="PF06965">
    <property type="entry name" value="Na_H_antiport_1"/>
    <property type="match status" value="1"/>
</dbReference>
<dbReference type="Pfam" id="PF13462">
    <property type="entry name" value="Thioredoxin_4"/>
    <property type="match status" value="1"/>
</dbReference>
<dbReference type="SUPFAM" id="SSF52833">
    <property type="entry name" value="Thioredoxin-like"/>
    <property type="match status" value="1"/>
</dbReference>
<dbReference type="PROSITE" id="PS51352">
    <property type="entry name" value="THIOREDOXIN_2"/>
    <property type="match status" value="1"/>
</dbReference>
<accession>A4T134</accession>
<gene>
    <name evidence="1" type="primary">nhaA1</name>
    <name type="ordered locus">Mflv_0238</name>
</gene>
<keyword id="KW-0050">Antiport</keyword>
<keyword id="KW-1003">Cell membrane</keyword>
<keyword id="KW-0406">Ion transport</keyword>
<keyword id="KW-0472">Membrane</keyword>
<keyword id="KW-0915">Sodium</keyword>
<keyword id="KW-0739">Sodium transport</keyword>
<keyword id="KW-0812">Transmembrane</keyword>
<keyword id="KW-1133">Transmembrane helix</keyword>
<keyword id="KW-0813">Transport</keyword>
<protein>
    <recommendedName>
        <fullName evidence="1">Na(+)/H(+) antiporter NhaA 1</fullName>
    </recommendedName>
    <alternativeName>
        <fullName evidence="1">Sodium/proton antiporter NhaA 1</fullName>
    </alternativeName>
</protein>